<gene>
    <name evidence="1" type="primary">mnmG</name>
    <name evidence="1" type="synonym">gidA</name>
    <name type="ordered locus">ECED1_4431</name>
</gene>
<feature type="chain" id="PRO_1000122748" description="tRNA uridine 5-carboxymethylaminomethyl modification enzyme MnmG">
    <location>
        <begin position="1"/>
        <end position="629"/>
    </location>
</feature>
<feature type="binding site" evidence="1">
    <location>
        <begin position="13"/>
        <end position="18"/>
    </location>
    <ligand>
        <name>FAD</name>
        <dbReference type="ChEBI" id="CHEBI:57692"/>
    </ligand>
</feature>
<feature type="binding site" evidence="1">
    <location>
        <position position="125"/>
    </location>
    <ligand>
        <name>FAD</name>
        <dbReference type="ChEBI" id="CHEBI:57692"/>
    </ligand>
</feature>
<feature type="binding site" evidence="1">
    <location>
        <position position="180"/>
    </location>
    <ligand>
        <name>FAD</name>
        <dbReference type="ChEBI" id="CHEBI:57692"/>
    </ligand>
</feature>
<feature type="binding site" evidence="1">
    <location>
        <begin position="273"/>
        <end position="287"/>
    </location>
    <ligand>
        <name>NAD(+)</name>
        <dbReference type="ChEBI" id="CHEBI:57540"/>
    </ligand>
</feature>
<feature type="binding site" evidence="1">
    <location>
        <position position="370"/>
    </location>
    <ligand>
        <name>FAD</name>
        <dbReference type="ChEBI" id="CHEBI:57692"/>
    </ligand>
</feature>
<reference key="1">
    <citation type="journal article" date="2009" name="PLoS Genet.">
        <title>Organised genome dynamics in the Escherichia coli species results in highly diverse adaptive paths.</title>
        <authorList>
            <person name="Touchon M."/>
            <person name="Hoede C."/>
            <person name="Tenaillon O."/>
            <person name="Barbe V."/>
            <person name="Baeriswyl S."/>
            <person name="Bidet P."/>
            <person name="Bingen E."/>
            <person name="Bonacorsi S."/>
            <person name="Bouchier C."/>
            <person name="Bouvet O."/>
            <person name="Calteau A."/>
            <person name="Chiapello H."/>
            <person name="Clermont O."/>
            <person name="Cruveiller S."/>
            <person name="Danchin A."/>
            <person name="Diard M."/>
            <person name="Dossat C."/>
            <person name="Karoui M.E."/>
            <person name="Frapy E."/>
            <person name="Garry L."/>
            <person name="Ghigo J.M."/>
            <person name="Gilles A.M."/>
            <person name="Johnson J."/>
            <person name="Le Bouguenec C."/>
            <person name="Lescat M."/>
            <person name="Mangenot S."/>
            <person name="Martinez-Jehanne V."/>
            <person name="Matic I."/>
            <person name="Nassif X."/>
            <person name="Oztas S."/>
            <person name="Petit M.A."/>
            <person name="Pichon C."/>
            <person name="Rouy Z."/>
            <person name="Ruf C.S."/>
            <person name="Schneider D."/>
            <person name="Tourret J."/>
            <person name="Vacherie B."/>
            <person name="Vallenet D."/>
            <person name="Medigue C."/>
            <person name="Rocha E.P.C."/>
            <person name="Denamur E."/>
        </authorList>
    </citation>
    <scope>NUCLEOTIDE SEQUENCE [LARGE SCALE GENOMIC DNA]</scope>
    <source>
        <strain>ED1a</strain>
    </source>
</reference>
<keyword id="KW-0963">Cytoplasm</keyword>
<keyword id="KW-0274">FAD</keyword>
<keyword id="KW-0285">Flavoprotein</keyword>
<keyword id="KW-0520">NAD</keyword>
<keyword id="KW-0819">tRNA processing</keyword>
<organism>
    <name type="scientific">Escherichia coli O81 (strain ED1a)</name>
    <dbReference type="NCBI Taxonomy" id="585397"/>
    <lineage>
        <taxon>Bacteria</taxon>
        <taxon>Pseudomonadati</taxon>
        <taxon>Pseudomonadota</taxon>
        <taxon>Gammaproteobacteria</taxon>
        <taxon>Enterobacterales</taxon>
        <taxon>Enterobacteriaceae</taxon>
        <taxon>Escherichia</taxon>
    </lineage>
</organism>
<name>MNMG_ECO81</name>
<comment type="function">
    <text evidence="1">NAD-binding protein involved in the addition of a carboxymethylaminomethyl (cmnm) group at the wobble position (U34) of certain tRNAs, forming tRNA-cmnm(5)s(2)U34.</text>
</comment>
<comment type="cofactor">
    <cofactor evidence="1">
        <name>FAD</name>
        <dbReference type="ChEBI" id="CHEBI:57692"/>
    </cofactor>
</comment>
<comment type="subunit">
    <text evidence="1">Homodimer. Heterotetramer of two MnmE and two MnmG subunits.</text>
</comment>
<comment type="subcellular location">
    <subcellularLocation>
        <location evidence="1">Cytoplasm</location>
    </subcellularLocation>
</comment>
<comment type="similarity">
    <text evidence="1">Belongs to the MnmG family.</text>
</comment>
<evidence type="ECO:0000255" key="1">
    <source>
        <dbReference type="HAMAP-Rule" id="MF_00129"/>
    </source>
</evidence>
<accession>B7N2I0</accession>
<sequence>MFYPDPFDVIIIGGGHAGTEAAMAAARMGQQTLLLTHNIDTLGQMSCNPAIGGIGKGHLVKEVDALGGLMAKAIDQAGIQFRILNASKGPAVRATRAQADRVLYRQAVRTALENQPNLMIFQQAVEDLIVENDRVVGAVTQMGLKFRAKAVVLTVGTFLDGKIHIGLDNYSGGRAGDPPSIPLSRRLRELPLRVGRLKTGTPPRIDARTIDFSVLAQQHGDNPMPVFSFMGNASQHPQQVPCYITHTNEKTHDVIRSNLDRSPMYAGVIEGVGPRYCPSIEDKVMRFADRNQHQIFLEPEGLTSNEIYPNGISTSLPFDVQMQIVRSMQGMENAKIVRPGYAIEYDFFDPRDLKPTLESKFIQGLFFAGQINGTTGYEEAAAQGLLAGLNAARLSADKEGWAPARSQAYLGVLVDDLCTLGTKEPYRMFTSRAEYRLMLREDNADLRLTEIGRELGLVDDERWARFNEKLENIERERQRLKSTWVTPSAEAAAEVNAHLTAPLSREASGEDLLRRPEMTYEKLTTLTPFAPALTDEQAAEQVEIQVKYEGYIARQQDEIEKQLRNENTLLPATLDYRQVSGLSNEVIAKLNDHKPASIGQASRISGVTPAAISILLVWLKKQGMLRRSA</sequence>
<protein>
    <recommendedName>
        <fullName evidence="1">tRNA uridine 5-carboxymethylaminomethyl modification enzyme MnmG</fullName>
    </recommendedName>
    <alternativeName>
        <fullName evidence="1">Glucose-inhibited division protein A</fullName>
    </alternativeName>
</protein>
<dbReference type="EMBL" id="CU928162">
    <property type="protein sequence ID" value="CAR10551.2"/>
    <property type="molecule type" value="Genomic_DNA"/>
</dbReference>
<dbReference type="RefSeq" id="WP_000499788.1">
    <property type="nucleotide sequence ID" value="NC_011745.1"/>
</dbReference>
<dbReference type="SMR" id="B7N2I0"/>
<dbReference type="GeneID" id="75205459"/>
<dbReference type="KEGG" id="ecq:ECED1_4431"/>
<dbReference type="HOGENOM" id="CLU_007831_2_2_6"/>
<dbReference type="Proteomes" id="UP000000748">
    <property type="component" value="Chromosome"/>
</dbReference>
<dbReference type="GO" id="GO:0005829">
    <property type="term" value="C:cytosol"/>
    <property type="evidence" value="ECO:0007669"/>
    <property type="project" value="TreeGrafter"/>
</dbReference>
<dbReference type="GO" id="GO:0050660">
    <property type="term" value="F:flavin adenine dinucleotide binding"/>
    <property type="evidence" value="ECO:0007669"/>
    <property type="project" value="UniProtKB-UniRule"/>
</dbReference>
<dbReference type="GO" id="GO:0030488">
    <property type="term" value="P:tRNA methylation"/>
    <property type="evidence" value="ECO:0007669"/>
    <property type="project" value="TreeGrafter"/>
</dbReference>
<dbReference type="GO" id="GO:0002098">
    <property type="term" value="P:tRNA wobble uridine modification"/>
    <property type="evidence" value="ECO:0007669"/>
    <property type="project" value="InterPro"/>
</dbReference>
<dbReference type="FunFam" id="1.10.10.1800:FF:000001">
    <property type="entry name" value="tRNA uridine 5-carboxymethylaminomethyl modification enzyme MnmG"/>
    <property type="match status" value="1"/>
</dbReference>
<dbReference type="FunFam" id="1.10.150.570:FF:000001">
    <property type="entry name" value="tRNA uridine 5-carboxymethylaminomethyl modification enzyme MnmG"/>
    <property type="match status" value="1"/>
</dbReference>
<dbReference type="FunFam" id="3.50.50.60:FF:000002">
    <property type="entry name" value="tRNA uridine 5-carboxymethylaminomethyl modification enzyme MnmG"/>
    <property type="match status" value="1"/>
</dbReference>
<dbReference type="FunFam" id="3.50.50.60:FF:000010">
    <property type="entry name" value="tRNA uridine 5-carboxymethylaminomethyl modification enzyme MnmG"/>
    <property type="match status" value="1"/>
</dbReference>
<dbReference type="Gene3D" id="3.50.50.60">
    <property type="entry name" value="FAD/NAD(P)-binding domain"/>
    <property type="match status" value="2"/>
</dbReference>
<dbReference type="Gene3D" id="1.10.150.570">
    <property type="entry name" value="GidA associated domain, C-terminal subdomain"/>
    <property type="match status" value="1"/>
</dbReference>
<dbReference type="Gene3D" id="1.10.10.1800">
    <property type="entry name" value="tRNA uridine 5-carboxymethylaminomethyl modification enzyme MnmG/GidA"/>
    <property type="match status" value="1"/>
</dbReference>
<dbReference type="HAMAP" id="MF_00129">
    <property type="entry name" value="MnmG_GidA"/>
    <property type="match status" value="1"/>
</dbReference>
<dbReference type="InterPro" id="IPR036188">
    <property type="entry name" value="FAD/NAD-bd_sf"/>
</dbReference>
<dbReference type="InterPro" id="IPR049312">
    <property type="entry name" value="GIDA_C_N"/>
</dbReference>
<dbReference type="InterPro" id="IPR004416">
    <property type="entry name" value="MnmG"/>
</dbReference>
<dbReference type="InterPro" id="IPR002218">
    <property type="entry name" value="MnmG-rel"/>
</dbReference>
<dbReference type="InterPro" id="IPR020595">
    <property type="entry name" value="MnmG-rel_CS"/>
</dbReference>
<dbReference type="InterPro" id="IPR026904">
    <property type="entry name" value="MnmG_C"/>
</dbReference>
<dbReference type="InterPro" id="IPR047001">
    <property type="entry name" value="MnmG_C_subdom"/>
</dbReference>
<dbReference type="InterPro" id="IPR044920">
    <property type="entry name" value="MnmG_C_subdom_sf"/>
</dbReference>
<dbReference type="InterPro" id="IPR040131">
    <property type="entry name" value="MnmG_N"/>
</dbReference>
<dbReference type="NCBIfam" id="TIGR00136">
    <property type="entry name" value="mnmG_gidA"/>
    <property type="match status" value="1"/>
</dbReference>
<dbReference type="PANTHER" id="PTHR11806">
    <property type="entry name" value="GLUCOSE INHIBITED DIVISION PROTEIN A"/>
    <property type="match status" value="1"/>
</dbReference>
<dbReference type="PANTHER" id="PTHR11806:SF0">
    <property type="entry name" value="PROTEIN MTO1 HOMOLOG, MITOCHONDRIAL"/>
    <property type="match status" value="1"/>
</dbReference>
<dbReference type="Pfam" id="PF01134">
    <property type="entry name" value="GIDA"/>
    <property type="match status" value="1"/>
</dbReference>
<dbReference type="Pfam" id="PF21680">
    <property type="entry name" value="GIDA_C_1st"/>
    <property type="match status" value="1"/>
</dbReference>
<dbReference type="Pfam" id="PF13932">
    <property type="entry name" value="SAM_GIDA_C"/>
    <property type="match status" value="1"/>
</dbReference>
<dbReference type="SMART" id="SM01228">
    <property type="entry name" value="GIDA_assoc_3"/>
    <property type="match status" value="1"/>
</dbReference>
<dbReference type="SUPFAM" id="SSF51905">
    <property type="entry name" value="FAD/NAD(P)-binding domain"/>
    <property type="match status" value="1"/>
</dbReference>
<dbReference type="PROSITE" id="PS01280">
    <property type="entry name" value="GIDA_1"/>
    <property type="match status" value="1"/>
</dbReference>
<dbReference type="PROSITE" id="PS01281">
    <property type="entry name" value="GIDA_2"/>
    <property type="match status" value="1"/>
</dbReference>
<proteinExistence type="inferred from homology"/>